<comment type="function">
    <text evidence="4 6">Catalyzes the condensation of the acetyl group of acetyl-CoA with 3-methyl-2-oxobutanoate (2-oxoisovalerate) to form 3-carboxy-3-hydroxy-4-methylpentanoate (2-isopropylmalate).</text>
</comment>
<comment type="catalytic activity">
    <reaction evidence="6">
        <text>3-methyl-2-oxobutanoate + acetyl-CoA + H2O = (2S)-2-isopropylmalate + CoA + H(+)</text>
        <dbReference type="Rhea" id="RHEA:21524"/>
        <dbReference type="ChEBI" id="CHEBI:1178"/>
        <dbReference type="ChEBI" id="CHEBI:11851"/>
        <dbReference type="ChEBI" id="CHEBI:15377"/>
        <dbReference type="ChEBI" id="CHEBI:15378"/>
        <dbReference type="ChEBI" id="CHEBI:57287"/>
        <dbReference type="ChEBI" id="CHEBI:57288"/>
        <dbReference type="EC" id="2.3.3.13"/>
    </reaction>
    <physiologicalReaction direction="left-to-right" evidence="6">
        <dbReference type="Rhea" id="RHEA:21525"/>
    </physiologicalReaction>
</comment>
<comment type="cofactor">
    <cofactor evidence="1 2">
        <name>a divalent metal cation</name>
        <dbReference type="ChEBI" id="CHEBI:60240"/>
    </cofactor>
</comment>
<comment type="pathway">
    <text evidence="9">Amino-acid biosynthesis; L-leucine biosynthesis; L-leucine from 3-methyl-2-oxobutanoate: step 1/4.</text>
</comment>
<comment type="subunit">
    <text evidence="1">Homodimer.</text>
</comment>
<comment type="interaction">
    <interactant intactId="EBI-10116">
        <id>P06208</id>
    </interactant>
    <interactant intactId="EBI-37359">
        <id>Q12166</id>
        <label>LEU9</label>
    </interactant>
    <organismsDiffer>false</organismsDiffer>
    <experiments>4</experiments>
</comment>
<comment type="subcellular location">
    <molecule>Isoform Cytoplasmic</molecule>
    <subcellularLocation>
        <location evidence="6">Cytoplasm</location>
    </subcellularLocation>
</comment>
<comment type="subcellular location">
    <molecule>Isoform Mitochondrial</molecule>
    <subcellularLocation>
        <location evidence="6">Mitochondrion</location>
    </subcellularLocation>
</comment>
<comment type="alternative products">
    <event type="alternative initiation"/>
    <isoform>
        <id>P06208-1</id>
        <name evidence="7">Mitochondrial</name>
        <sequence type="displayed"/>
    </isoform>
    <isoform>
        <id>P06208-2</id>
        <name evidence="7">Cytoplasmic</name>
        <sequence type="described" ref="VSP_018640"/>
    </isoform>
</comment>
<comment type="disruption phenotype">
    <text evidence="4">Retains 20% 2-isopropylmalate synthase activity and grows in the absence of Leu; a double LEU1-LEU9 deletion has no 2-isopropylmalate synthase, does not grow in the absence of Leu.</text>
</comment>
<comment type="miscellaneous">
    <text evidence="5">Present with 6630 molecules/cell in log phase SD medium.</text>
</comment>
<comment type="similarity">
    <text evidence="8">Belongs to the alpha-IPM synthase/homocitrate synthase family. LeuA type 2 subfamily.</text>
</comment>
<proteinExistence type="evidence at protein level"/>
<feature type="chain" id="PRO_0000001046" description="2-isopropylmalate synthase">
    <location>
        <begin position="1"/>
        <end position="619"/>
    </location>
</feature>
<feature type="domain" description="Pyruvate carboxyltransferase" evidence="3">
    <location>
        <begin position="61"/>
        <end position="336"/>
    </location>
</feature>
<feature type="binding site" evidence="1">
    <location>
        <position position="70"/>
    </location>
    <ligand>
        <name>a divalent metal cation</name>
        <dbReference type="ChEBI" id="CHEBI:60240"/>
    </ligand>
</feature>
<feature type="binding site" evidence="1">
    <location>
        <position position="275"/>
    </location>
    <ligand>
        <name>a divalent metal cation</name>
        <dbReference type="ChEBI" id="CHEBI:60240"/>
    </ligand>
</feature>
<feature type="binding site" evidence="1">
    <location>
        <position position="277"/>
    </location>
    <ligand>
        <name>a divalent metal cation</name>
        <dbReference type="ChEBI" id="CHEBI:60240"/>
    </ligand>
</feature>
<feature type="binding site" evidence="1">
    <location>
        <position position="311"/>
    </location>
    <ligand>
        <name>a divalent metal cation</name>
        <dbReference type="ChEBI" id="CHEBI:60240"/>
    </ligand>
</feature>
<feature type="splice variant" id="VSP_018640" description="In isoform Cytoplasmic." evidence="8">
    <location>
        <begin position="1"/>
        <end position="30"/>
    </location>
</feature>
<dbReference type="EC" id="2.3.3.13" evidence="6"/>
<dbReference type="EMBL" id="M12893">
    <property type="protein sequence ID" value="AAA34743.1"/>
    <property type="molecule type" value="Genomic_DNA"/>
</dbReference>
<dbReference type="EMBL" id="M12893">
    <property type="protein sequence ID" value="AAA34744.1"/>
    <property type="molecule type" value="Genomic_DNA"/>
</dbReference>
<dbReference type="EMBL" id="Z50161">
    <property type="protein sequence ID" value="CAA90522.1"/>
    <property type="molecule type" value="Genomic_DNA"/>
</dbReference>
<dbReference type="EMBL" id="Z71380">
    <property type="protein sequence ID" value="CAA95980.1"/>
    <property type="molecule type" value="Genomic_DNA"/>
</dbReference>
<dbReference type="EMBL" id="Z12126">
    <property type="protein sequence ID" value="CAA78110.1"/>
    <property type="molecule type" value="Genomic_DNA"/>
</dbReference>
<dbReference type="EMBL" id="BK006947">
    <property type="protein sequence ID" value="DAA10441.1"/>
    <property type="molecule type" value="Genomic_DNA"/>
</dbReference>
<dbReference type="PIR" id="A23872">
    <property type="entry name" value="A23872"/>
</dbReference>
<dbReference type="RefSeq" id="NP_014295.1">
    <molecule id="P06208-1"/>
    <property type="nucleotide sequence ID" value="NM_001182942.1"/>
</dbReference>
<dbReference type="SMR" id="P06208"/>
<dbReference type="BioGRID" id="35719">
    <property type="interactions" value="158"/>
</dbReference>
<dbReference type="DIP" id="DIP-1412N"/>
<dbReference type="FunCoup" id="P06208">
    <property type="interactions" value="273"/>
</dbReference>
<dbReference type="IntAct" id="P06208">
    <property type="interactions" value="16"/>
</dbReference>
<dbReference type="MINT" id="P06208"/>
<dbReference type="STRING" id="4932.YNL104C"/>
<dbReference type="iPTMnet" id="P06208"/>
<dbReference type="PaxDb" id="4932-YNL104C"/>
<dbReference type="PeptideAtlas" id="P06208"/>
<dbReference type="EnsemblFungi" id="YNL104C_mRNA">
    <molecule id="P06208-1"/>
    <property type="protein sequence ID" value="YNL104C"/>
    <property type="gene ID" value="YNL104C"/>
</dbReference>
<dbReference type="GeneID" id="855619"/>
<dbReference type="KEGG" id="sce:YNL104C"/>
<dbReference type="AGR" id="SGD:S000005048"/>
<dbReference type="SGD" id="S000005048">
    <property type="gene designation" value="LEU4"/>
</dbReference>
<dbReference type="VEuPathDB" id="FungiDB:YNL104C"/>
<dbReference type="eggNOG" id="KOG2367">
    <property type="taxonomic scope" value="Eukaryota"/>
</dbReference>
<dbReference type="GeneTree" id="ENSGT00940000176815"/>
<dbReference type="HOGENOM" id="CLU_004588_3_0_1"/>
<dbReference type="InParanoid" id="P06208"/>
<dbReference type="OMA" id="EYCNQME"/>
<dbReference type="OrthoDB" id="418791at2759"/>
<dbReference type="BioCyc" id="YEAST:YNL104C-MONOMER"/>
<dbReference type="UniPathway" id="UPA00048">
    <property type="reaction ID" value="UER00070"/>
</dbReference>
<dbReference type="BioGRID-ORCS" id="855619">
    <property type="hits" value="0 hits in 10 CRISPR screens"/>
</dbReference>
<dbReference type="CD-CODE" id="E03F929F">
    <property type="entry name" value="Stress granule"/>
</dbReference>
<dbReference type="PRO" id="PR:P06208"/>
<dbReference type="Proteomes" id="UP000002311">
    <property type="component" value="Chromosome XIV"/>
</dbReference>
<dbReference type="RNAct" id="P06208">
    <property type="molecule type" value="protein"/>
</dbReference>
<dbReference type="GO" id="GO:0005737">
    <property type="term" value="C:cytoplasm"/>
    <property type="evidence" value="ECO:0000314"/>
    <property type="project" value="SGD"/>
</dbReference>
<dbReference type="GO" id="GO:0005739">
    <property type="term" value="C:mitochondrion"/>
    <property type="evidence" value="ECO:0000314"/>
    <property type="project" value="SGD"/>
</dbReference>
<dbReference type="GO" id="GO:0003852">
    <property type="term" value="F:2-isopropylmalate synthase activity"/>
    <property type="evidence" value="ECO:0000314"/>
    <property type="project" value="SGD"/>
</dbReference>
<dbReference type="GO" id="GO:0046872">
    <property type="term" value="F:metal ion binding"/>
    <property type="evidence" value="ECO:0007669"/>
    <property type="project" value="UniProtKB-KW"/>
</dbReference>
<dbReference type="GO" id="GO:0009098">
    <property type="term" value="P:L-leucine biosynthetic process"/>
    <property type="evidence" value="ECO:0000315"/>
    <property type="project" value="SGD"/>
</dbReference>
<dbReference type="CDD" id="cd07942">
    <property type="entry name" value="DRE_TIM_LeuA"/>
    <property type="match status" value="1"/>
</dbReference>
<dbReference type="FunFam" id="3.20.20.70:FF:000045">
    <property type="entry name" value="2-isopropylmalate synthase"/>
    <property type="match status" value="1"/>
</dbReference>
<dbReference type="FunFam" id="3.30.160.270:FF:000002">
    <property type="entry name" value="2-isopropylmalate synthase"/>
    <property type="match status" value="1"/>
</dbReference>
<dbReference type="Gene3D" id="3.30.160.270">
    <property type="match status" value="1"/>
</dbReference>
<dbReference type="Gene3D" id="3.20.20.70">
    <property type="entry name" value="Aldolase class I"/>
    <property type="match status" value="1"/>
</dbReference>
<dbReference type="HAMAP" id="MF_00572">
    <property type="entry name" value="LeuA_type2"/>
    <property type="match status" value="1"/>
</dbReference>
<dbReference type="InterPro" id="IPR013709">
    <property type="entry name" value="2-isopropylmalate_synth_dimer"/>
</dbReference>
<dbReference type="InterPro" id="IPR002034">
    <property type="entry name" value="AIPM/Hcit_synth_CS"/>
</dbReference>
<dbReference type="InterPro" id="IPR013785">
    <property type="entry name" value="Aldolase_TIM"/>
</dbReference>
<dbReference type="InterPro" id="IPR005668">
    <property type="entry name" value="IPM_Synthase"/>
</dbReference>
<dbReference type="InterPro" id="IPR054692">
    <property type="entry name" value="LeuA-like_post-cat"/>
</dbReference>
<dbReference type="InterPro" id="IPR036230">
    <property type="entry name" value="LeuA_allosteric_dom_sf"/>
</dbReference>
<dbReference type="InterPro" id="IPR039371">
    <property type="entry name" value="LeuA_N_DRE-TIM"/>
</dbReference>
<dbReference type="InterPro" id="IPR000891">
    <property type="entry name" value="PYR_CT"/>
</dbReference>
<dbReference type="NCBIfam" id="TIGR00970">
    <property type="entry name" value="leuA_yeast"/>
    <property type="match status" value="1"/>
</dbReference>
<dbReference type="NCBIfam" id="NF002991">
    <property type="entry name" value="PRK03739.1"/>
    <property type="match status" value="1"/>
</dbReference>
<dbReference type="PANTHER" id="PTHR46911">
    <property type="match status" value="1"/>
</dbReference>
<dbReference type="PANTHER" id="PTHR46911:SF2">
    <property type="entry name" value="2-ISOPROPYLMALATE SYNTHASE-RELATED"/>
    <property type="match status" value="1"/>
</dbReference>
<dbReference type="Pfam" id="PF00682">
    <property type="entry name" value="HMGL-like"/>
    <property type="match status" value="1"/>
</dbReference>
<dbReference type="Pfam" id="PF22615">
    <property type="entry name" value="IPMS_D2"/>
    <property type="match status" value="1"/>
</dbReference>
<dbReference type="Pfam" id="PF08502">
    <property type="entry name" value="LeuA_dimer"/>
    <property type="match status" value="1"/>
</dbReference>
<dbReference type="SMART" id="SM00917">
    <property type="entry name" value="LeuA_dimer"/>
    <property type="match status" value="1"/>
</dbReference>
<dbReference type="SUPFAM" id="SSF110921">
    <property type="entry name" value="2-isopropylmalate synthase LeuA, allosteric (dimerisation) domain"/>
    <property type="match status" value="1"/>
</dbReference>
<dbReference type="SUPFAM" id="SSF51569">
    <property type="entry name" value="Aldolase"/>
    <property type="match status" value="1"/>
</dbReference>
<dbReference type="SUPFAM" id="SSF89000">
    <property type="entry name" value="post-HMGL domain-like"/>
    <property type="match status" value="1"/>
</dbReference>
<dbReference type="PROSITE" id="PS00815">
    <property type="entry name" value="AIPM_HOMOCIT_SYNTH_1"/>
    <property type="match status" value="1"/>
</dbReference>
<dbReference type="PROSITE" id="PS00816">
    <property type="entry name" value="AIPM_HOMOCIT_SYNTH_2"/>
    <property type="match status" value="1"/>
</dbReference>
<dbReference type="PROSITE" id="PS50991">
    <property type="entry name" value="PYR_CT"/>
    <property type="match status" value="1"/>
</dbReference>
<name>LEU1_YEAST</name>
<evidence type="ECO:0000250" key="1">
    <source>
        <dbReference type="UniProtKB" id="P9WQB3"/>
    </source>
</evidence>
<evidence type="ECO:0000250" key="2">
    <source>
        <dbReference type="UniProtKB" id="Q9JZG1"/>
    </source>
</evidence>
<evidence type="ECO:0000255" key="3">
    <source>
        <dbReference type="PROSITE-ProRule" id="PRU01151"/>
    </source>
</evidence>
<evidence type="ECO:0000269" key="4">
    <source>
    </source>
</evidence>
<evidence type="ECO:0000269" key="5">
    <source>
    </source>
</evidence>
<evidence type="ECO:0000269" key="6">
    <source>
    </source>
</evidence>
<evidence type="ECO:0000303" key="7">
    <source>
    </source>
</evidence>
<evidence type="ECO:0000305" key="8"/>
<evidence type="ECO:0000305" key="9">
    <source>
    </source>
</evidence>
<keyword id="KW-0024">Alternative initiation</keyword>
<keyword id="KW-0028">Amino-acid biosynthesis</keyword>
<keyword id="KW-0100">Branched-chain amino acid biosynthesis</keyword>
<keyword id="KW-0963">Cytoplasm</keyword>
<keyword id="KW-0432">Leucine biosynthesis</keyword>
<keyword id="KW-0479">Metal-binding</keyword>
<keyword id="KW-0496">Mitochondrion</keyword>
<keyword id="KW-1185">Reference proteome</keyword>
<keyword id="KW-0808">Transferase</keyword>
<organism>
    <name type="scientific">Saccharomyces cerevisiae (strain ATCC 204508 / S288c)</name>
    <name type="common">Baker's yeast</name>
    <dbReference type="NCBI Taxonomy" id="559292"/>
    <lineage>
        <taxon>Eukaryota</taxon>
        <taxon>Fungi</taxon>
        <taxon>Dikarya</taxon>
        <taxon>Ascomycota</taxon>
        <taxon>Saccharomycotina</taxon>
        <taxon>Saccharomycetes</taxon>
        <taxon>Saccharomycetales</taxon>
        <taxon>Saccharomycetaceae</taxon>
        <taxon>Saccharomyces</taxon>
    </lineage>
</organism>
<reference key="1">
    <citation type="journal article" date="1986" name="J. Biol. Chem.">
        <title>Structure of yeast LEU4. The 5' flanking region contains features that predict two modes of control and two productive translation starts.</title>
        <authorList>
            <person name="Beltzer J.P."/>
            <person name="Chang L.-F.L."/>
            <person name="Hinkkanen A.E."/>
            <person name="Kohlhaw G.B."/>
        </authorList>
    </citation>
    <scope>NUCLEOTIDE SEQUENCE [GENOMIC DNA]</scope>
</reference>
<reference key="2">
    <citation type="journal article" date="1996" name="Yeast">
        <title>The sequence of a 21.3 kb DNA fragment from the left arm of yeast chromosome XIV reveals LEU4, MET4, POL1, RAS2, and six new open reading frames.</title>
        <authorList>
            <person name="Saiz J.E."/>
            <person name="Buitrago M.J."/>
            <person name="Soler A."/>
            <person name="del Rey F."/>
            <person name="Revuelta J.L."/>
        </authorList>
    </citation>
    <scope>NUCLEOTIDE SEQUENCE [GENOMIC DNA]</scope>
    <source>
        <strain>ATCC 96604 / S288c / FY1679</strain>
    </source>
</reference>
<reference key="3">
    <citation type="journal article" date="1997" name="Nature">
        <title>The nucleotide sequence of Saccharomyces cerevisiae chromosome XIV and its evolutionary implications.</title>
        <authorList>
            <person name="Philippsen P."/>
            <person name="Kleine K."/>
            <person name="Poehlmann R."/>
            <person name="Duesterhoeft A."/>
            <person name="Hamberg K."/>
            <person name="Hegemann J.H."/>
            <person name="Obermaier B."/>
            <person name="Urrestarazu L.A."/>
            <person name="Aert R."/>
            <person name="Albermann K."/>
            <person name="Altmann R."/>
            <person name="Andre B."/>
            <person name="Baladron V."/>
            <person name="Ballesta J.P.G."/>
            <person name="Becam A.-M."/>
            <person name="Beinhauer J.D."/>
            <person name="Boskovic J."/>
            <person name="Buitrago M.J."/>
            <person name="Bussereau F."/>
            <person name="Coster F."/>
            <person name="Crouzet M."/>
            <person name="D'Angelo M."/>
            <person name="Dal Pero F."/>
            <person name="De Antoni A."/>
            <person name="del Rey F."/>
            <person name="Doignon F."/>
            <person name="Domdey H."/>
            <person name="Dubois E."/>
            <person name="Fiedler T.A."/>
            <person name="Fleig U."/>
            <person name="Floeth M."/>
            <person name="Fritz C."/>
            <person name="Gaillardin C."/>
            <person name="Garcia-Cantalejo J.M."/>
            <person name="Glansdorff N."/>
            <person name="Goffeau A."/>
            <person name="Gueldener U."/>
            <person name="Herbert C.J."/>
            <person name="Heumann K."/>
            <person name="Heuss-Neitzel D."/>
            <person name="Hilbert H."/>
            <person name="Hinni K."/>
            <person name="Iraqui Houssaini I."/>
            <person name="Jacquet M."/>
            <person name="Jimenez A."/>
            <person name="Jonniaux J.-L."/>
            <person name="Karpfinger-Hartl L."/>
            <person name="Lanfranchi G."/>
            <person name="Lepingle A."/>
            <person name="Levesque H."/>
            <person name="Lyck R."/>
            <person name="Maftahi M."/>
            <person name="Mallet L."/>
            <person name="Maurer C.T.C."/>
            <person name="Messenguy F."/>
            <person name="Mewes H.-W."/>
            <person name="Moestl D."/>
            <person name="Nasr F."/>
            <person name="Nicaud J.-M."/>
            <person name="Niedenthal R.K."/>
            <person name="Pandolfo D."/>
            <person name="Pierard A."/>
            <person name="Piravandi E."/>
            <person name="Planta R.J."/>
            <person name="Pohl T.M."/>
            <person name="Purnelle B."/>
            <person name="Rebischung C."/>
            <person name="Remacha M.A."/>
            <person name="Revuelta J.L."/>
            <person name="Rinke M."/>
            <person name="Saiz J.E."/>
            <person name="Sartorello F."/>
            <person name="Scherens B."/>
            <person name="Sen-Gupta M."/>
            <person name="Soler-Mira A."/>
            <person name="Urbanus J.H.M."/>
            <person name="Valle G."/>
            <person name="Van Dyck L."/>
            <person name="Verhasselt P."/>
            <person name="Vierendeels F."/>
            <person name="Vissers S."/>
            <person name="Voet M."/>
            <person name="Volckaert G."/>
            <person name="Wach A."/>
            <person name="Wambutt R."/>
            <person name="Wedler H."/>
            <person name="Zollner A."/>
            <person name="Hani J."/>
        </authorList>
    </citation>
    <scope>NUCLEOTIDE SEQUENCE [LARGE SCALE GENOMIC DNA]</scope>
    <source>
        <strain>ATCC 204508 / S288c</strain>
    </source>
</reference>
<reference key="4">
    <citation type="journal article" date="2014" name="G3 (Bethesda)">
        <title>The reference genome sequence of Saccharomyces cerevisiae: Then and now.</title>
        <authorList>
            <person name="Engel S.R."/>
            <person name="Dietrich F.S."/>
            <person name="Fisk D.G."/>
            <person name="Binkley G."/>
            <person name="Balakrishnan R."/>
            <person name="Costanzo M.C."/>
            <person name="Dwight S.S."/>
            <person name="Hitz B.C."/>
            <person name="Karra K."/>
            <person name="Nash R.S."/>
            <person name="Weng S."/>
            <person name="Wong E.D."/>
            <person name="Lloyd P."/>
            <person name="Skrzypek M.S."/>
            <person name="Miyasato S.R."/>
            <person name="Simison M."/>
            <person name="Cherry J.M."/>
        </authorList>
    </citation>
    <scope>GENOME REANNOTATION</scope>
    <source>
        <strain>ATCC 204508 / S288c</strain>
    </source>
</reference>
<reference key="5">
    <citation type="journal article" date="1993" name="Mol. Microbiol.">
        <title>The general amino acid control regulates MET4, which encodes a methionine-pathway-specific transcriptional activator of Saccharomyces cerevisiae.</title>
        <authorList>
            <person name="Mountain H.A."/>
            <person name="Bystroem A.S."/>
            <person name="Korch C."/>
        </authorList>
    </citation>
    <scope>NUCLEOTIDE SEQUENCE [GENOMIC DNA] OF 1-23</scope>
    <source>
        <strain>ATCC 204508 / S288c</strain>
    </source>
</reference>
<reference key="6">
    <citation type="journal article" date="1988" name="J. Biol. Chem.">
        <title>Yeast LEU4 encodes mitochondrial and nonmitochondrial forms of alpha-isopropylmalate synthase.</title>
        <authorList>
            <person name="Beltzer J.P."/>
            <person name="Morris S.R."/>
            <person name="Kohlhaw G.B."/>
        </authorList>
    </citation>
    <scope>FUNCTION</scope>
    <scope>CATALYTIC ACTIVITY</scope>
    <scope>PATHWAY</scope>
    <scope>ALTERNATIVE INITIATION</scope>
</reference>
<reference key="7">
    <citation type="journal article" date="2000" name="Yeast">
        <title>Identification by functional analysis of the gene encoding alpha-isopropylmalate synthase II (LEU9) in Saccharomyces cerevisiae.</title>
        <authorList>
            <person name="Casalone E."/>
            <person name="Barberio C."/>
            <person name="Cavalieri D."/>
            <person name="Polsinelli M."/>
        </authorList>
    </citation>
    <scope>FUNCTION</scope>
    <scope>DISRUPTION PHENOTYPE</scope>
</reference>
<reference key="8">
    <citation type="journal article" date="2003" name="Nature">
        <title>Global analysis of protein expression in yeast.</title>
        <authorList>
            <person name="Ghaemmaghami S."/>
            <person name="Huh W.-K."/>
            <person name="Bower K."/>
            <person name="Howson R.W."/>
            <person name="Belle A."/>
            <person name="Dephoure N."/>
            <person name="O'Shea E.K."/>
            <person name="Weissman J.S."/>
        </authorList>
    </citation>
    <scope>LEVEL OF PROTEIN EXPRESSION [LARGE SCALE ANALYSIS]</scope>
</reference>
<reference key="9">
    <citation type="journal article" date="2012" name="Proc. Natl. Acad. Sci. U.S.A.">
        <title>N-terminal acetylome analyses and functional insights of the N-terminal acetyltransferase NatB.</title>
        <authorList>
            <person name="Van Damme P."/>
            <person name="Lasa M."/>
            <person name="Polevoda B."/>
            <person name="Gazquez C."/>
            <person name="Elosegui-Artola A."/>
            <person name="Kim D.S."/>
            <person name="De Juan-Pardo E."/>
            <person name="Demeyer K."/>
            <person name="Hole K."/>
            <person name="Larrea E."/>
            <person name="Timmerman E."/>
            <person name="Prieto J."/>
            <person name="Arnesen T."/>
            <person name="Sherman F."/>
            <person name="Gevaert K."/>
            <person name="Aldabe R."/>
        </authorList>
    </citation>
    <scope>IDENTIFICATION BY MASS SPECTROMETRY [LARGE SCALE ANALYSIS]</scope>
</reference>
<gene>
    <name type="primary">LEU4</name>
    <name type="ordered locus">YNL104C</name>
    <name type="ORF">N2173</name>
</gene>
<accession>P06208</accession>
<accession>D6W175</accession>
<sequence>MVKESIIALAEHAASRASRVIPPVKLAYKNMLKDPSSKYKPFNAPKLSNRKWPDNRITRAPRWLSTDLRDGNQSLPDPMSVEQKKEYFHKLVNIGFKEIEVSFPSASQTDFDFTRYAVENAPDDVSIQCLVQSREHLIKRTVEALTGAKKATIHTYLATSDMFREIVFNMSREEAISKAVEATKLVRKLTKDDPSQQATRWSYEFSPECFSDTPGEFAVEICEAVKKAWEPTEENPIIFNLPATVEVASPNVYADQIEYFATHITEREKVCISTHCHNDRGCGVAATELGMLAGADRVEGCLFGNGERTGNVDLVTVAMNMYTQGVSPNLDFSDLTSVLDVVERCNKIPVSQRAPYGGDLVVCAFSGSHQDAIKKGFNLQNKKRAQGETQWRIPYLPLDPKDIGRDYEAVIRVNSQSGKGGAAWVILRSLGLDLPRNMQIEFSSAVQDHADSLGRELKSDEISKLFKEAYNYNDEQYQAISLVNYNVEKFGTERRVFTGQVKVGDQIVDIEGTGNGPISSLVDALSNLLNVRFAVANYTEHSLGSGSSTQAASYIHLSYRRNADNEKAYKWGVGVSEDVGDSSVRAIFATINNIIHSGDVSIPSLAEVEGKNAAASGSA</sequence>
<protein>
    <recommendedName>
        <fullName>2-isopropylmalate synthase</fullName>
        <ecNumber evidence="6">2.3.3.13</ecNumber>
    </recommendedName>
    <alternativeName>
        <fullName>Alpha-IPM synthase</fullName>
    </alternativeName>
    <alternativeName>
        <fullName>Alpha-isopropylmalate synthase</fullName>
    </alternativeName>
</protein>